<sequence>MDKRPIGVMDSGLGGLSVIRVLREQLPQESVIFVGDQGHFPYGTKTKEQIQQLALRIGKFLLEQDVKMMIIACNTATAAALRLLQNELPIPVIGVIKPGAMAATQHHYKKIGVIGTESTIKNGAYAKTLAKLNPDLSVISSPAQPLVSIVEHGQTGTSEAQKAVDTELEVFDNQSIEALILGCTHFPFLQKEIHNKLGSNVQLIDPAFETIRQAKELLTGKNQLSDNLASSINLYSTGDAKDLVAGAQQWLPNGYSKCAHIELNEEG</sequence>
<accession>B2G6G1</accession>
<protein>
    <recommendedName>
        <fullName evidence="1">Glutamate racemase</fullName>
        <ecNumber evidence="1">5.1.1.3</ecNumber>
    </recommendedName>
</protein>
<evidence type="ECO:0000255" key="1">
    <source>
        <dbReference type="HAMAP-Rule" id="MF_00258"/>
    </source>
</evidence>
<comment type="function">
    <text evidence="1">Provides the (R)-glutamate required for cell wall biosynthesis.</text>
</comment>
<comment type="catalytic activity">
    <reaction evidence="1">
        <text>L-glutamate = D-glutamate</text>
        <dbReference type="Rhea" id="RHEA:12813"/>
        <dbReference type="ChEBI" id="CHEBI:29985"/>
        <dbReference type="ChEBI" id="CHEBI:29986"/>
        <dbReference type="EC" id="5.1.1.3"/>
    </reaction>
</comment>
<comment type="pathway">
    <text evidence="1">Cell wall biogenesis; peptidoglycan biosynthesis.</text>
</comment>
<comment type="similarity">
    <text evidence="1">Belongs to the aspartate/glutamate racemases family.</text>
</comment>
<organism>
    <name type="scientific">Limosilactobacillus reuteri subsp. reuteri (strain JCM 1112)</name>
    <name type="common">Lactobacillus reuteri</name>
    <dbReference type="NCBI Taxonomy" id="557433"/>
    <lineage>
        <taxon>Bacteria</taxon>
        <taxon>Bacillati</taxon>
        <taxon>Bacillota</taxon>
        <taxon>Bacilli</taxon>
        <taxon>Lactobacillales</taxon>
        <taxon>Lactobacillaceae</taxon>
        <taxon>Limosilactobacillus</taxon>
    </lineage>
</organism>
<keyword id="KW-0133">Cell shape</keyword>
<keyword id="KW-0961">Cell wall biogenesis/degradation</keyword>
<keyword id="KW-0413">Isomerase</keyword>
<keyword id="KW-0573">Peptidoglycan synthesis</keyword>
<dbReference type="EC" id="5.1.1.3" evidence="1"/>
<dbReference type="EMBL" id="AP007281">
    <property type="protein sequence ID" value="BAG25043.1"/>
    <property type="molecule type" value="Genomic_DNA"/>
</dbReference>
<dbReference type="RefSeq" id="WP_003667643.1">
    <property type="nucleotide sequence ID" value="NC_010609.1"/>
</dbReference>
<dbReference type="SMR" id="B2G6G1"/>
<dbReference type="KEGG" id="lrf:LAR_0527"/>
<dbReference type="HOGENOM" id="CLU_052344_0_2_9"/>
<dbReference type="UniPathway" id="UPA00219"/>
<dbReference type="GO" id="GO:0008881">
    <property type="term" value="F:glutamate racemase activity"/>
    <property type="evidence" value="ECO:0007669"/>
    <property type="project" value="UniProtKB-UniRule"/>
</dbReference>
<dbReference type="GO" id="GO:0071555">
    <property type="term" value="P:cell wall organization"/>
    <property type="evidence" value="ECO:0007669"/>
    <property type="project" value="UniProtKB-KW"/>
</dbReference>
<dbReference type="GO" id="GO:0009252">
    <property type="term" value="P:peptidoglycan biosynthetic process"/>
    <property type="evidence" value="ECO:0007669"/>
    <property type="project" value="UniProtKB-UniRule"/>
</dbReference>
<dbReference type="GO" id="GO:0008360">
    <property type="term" value="P:regulation of cell shape"/>
    <property type="evidence" value="ECO:0007669"/>
    <property type="project" value="UniProtKB-KW"/>
</dbReference>
<dbReference type="FunFam" id="3.40.50.1860:FF:000002">
    <property type="entry name" value="Glutamate racemase"/>
    <property type="match status" value="1"/>
</dbReference>
<dbReference type="Gene3D" id="3.40.50.1860">
    <property type="match status" value="2"/>
</dbReference>
<dbReference type="HAMAP" id="MF_00258">
    <property type="entry name" value="Glu_racemase"/>
    <property type="match status" value="1"/>
</dbReference>
<dbReference type="InterPro" id="IPR015942">
    <property type="entry name" value="Asp/Glu/hydantoin_racemase"/>
</dbReference>
<dbReference type="InterPro" id="IPR001920">
    <property type="entry name" value="Asp/Glu_race"/>
</dbReference>
<dbReference type="InterPro" id="IPR018187">
    <property type="entry name" value="Asp/Glu_racemase_AS_1"/>
</dbReference>
<dbReference type="InterPro" id="IPR033134">
    <property type="entry name" value="Asp/Glu_racemase_AS_2"/>
</dbReference>
<dbReference type="InterPro" id="IPR004391">
    <property type="entry name" value="Glu_race"/>
</dbReference>
<dbReference type="NCBIfam" id="TIGR00067">
    <property type="entry name" value="glut_race"/>
    <property type="match status" value="1"/>
</dbReference>
<dbReference type="PANTHER" id="PTHR21198">
    <property type="entry name" value="GLUTAMATE RACEMASE"/>
    <property type="match status" value="1"/>
</dbReference>
<dbReference type="PANTHER" id="PTHR21198:SF2">
    <property type="entry name" value="GLUTAMATE RACEMASE"/>
    <property type="match status" value="1"/>
</dbReference>
<dbReference type="Pfam" id="PF01177">
    <property type="entry name" value="Asp_Glu_race"/>
    <property type="match status" value="1"/>
</dbReference>
<dbReference type="SUPFAM" id="SSF53681">
    <property type="entry name" value="Aspartate/glutamate racemase"/>
    <property type="match status" value="2"/>
</dbReference>
<dbReference type="PROSITE" id="PS00923">
    <property type="entry name" value="ASP_GLU_RACEMASE_1"/>
    <property type="match status" value="1"/>
</dbReference>
<dbReference type="PROSITE" id="PS00924">
    <property type="entry name" value="ASP_GLU_RACEMASE_2"/>
    <property type="match status" value="1"/>
</dbReference>
<reference key="1">
    <citation type="journal article" date="2008" name="DNA Res.">
        <title>Comparative genome analysis of Lactobacillus reuteri and Lactobacillus fermentum reveal a genomic island for reuterin and cobalamin production.</title>
        <authorList>
            <person name="Morita H."/>
            <person name="Toh H."/>
            <person name="Fukuda S."/>
            <person name="Horikawa H."/>
            <person name="Oshima K."/>
            <person name="Suzuki T."/>
            <person name="Murakami M."/>
            <person name="Hisamatsu S."/>
            <person name="Kato Y."/>
            <person name="Takizawa T."/>
            <person name="Fukuoka H."/>
            <person name="Yoshimura T."/>
            <person name="Itoh K."/>
            <person name="O'Sullivan D.J."/>
            <person name="McKay L.L."/>
            <person name="Ohno H."/>
            <person name="Kikuchi J."/>
            <person name="Masaoka T."/>
            <person name="Hattori M."/>
        </authorList>
    </citation>
    <scope>NUCLEOTIDE SEQUENCE [LARGE SCALE GENOMIC DNA]</scope>
    <source>
        <strain>JCM 1112</strain>
    </source>
</reference>
<feature type="chain" id="PRO_1000114053" description="Glutamate racemase">
    <location>
        <begin position="1"/>
        <end position="267"/>
    </location>
</feature>
<feature type="active site" description="Proton donor/acceptor" evidence="1">
    <location>
        <position position="73"/>
    </location>
</feature>
<feature type="active site" description="Proton donor/acceptor" evidence="1">
    <location>
        <position position="183"/>
    </location>
</feature>
<feature type="binding site" evidence="1">
    <location>
        <begin position="10"/>
        <end position="11"/>
    </location>
    <ligand>
        <name>substrate</name>
    </ligand>
</feature>
<feature type="binding site" evidence="1">
    <location>
        <begin position="42"/>
        <end position="43"/>
    </location>
    <ligand>
        <name>substrate</name>
    </ligand>
</feature>
<feature type="binding site" evidence="1">
    <location>
        <begin position="74"/>
        <end position="75"/>
    </location>
    <ligand>
        <name>substrate</name>
    </ligand>
</feature>
<feature type="binding site" evidence="1">
    <location>
        <begin position="184"/>
        <end position="185"/>
    </location>
    <ligand>
        <name>substrate</name>
    </ligand>
</feature>
<name>MURI_LIMRJ</name>
<proteinExistence type="inferred from homology"/>
<gene>
    <name evidence="1" type="primary">murI</name>
    <name type="ordered locus">LAR_0527</name>
</gene>